<protein>
    <recommendedName>
        <fullName evidence="1">Lipoyl synthase</fullName>
        <ecNumber evidence="1">2.8.1.8</ecNumber>
    </recommendedName>
    <alternativeName>
        <fullName evidence="1">Lip-syn</fullName>
        <shortName evidence="1">LS</shortName>
    </alternativeName>
    <alternativeName>
        <fullName evidence="1">Lipoate synthase</fullName>
    </alternativeName>
    <alternativeName>
        <fullName evidence="1">Lipoic acid synthase</fullName>
    </alternativeName>
    <alternativeName>
        <fullName evidence="1">Sulfur insertion protein LipA</fullName>
    </alternativeName>
</protein>
<accession>B7L9H2</accession>
<reference key="1">
    <citation type="journal article" date="2009" name="PLoS Genet.">
        <title>Organised genome dynamics in the Escherichia coli species results in highly diverse adaptive paths.</title>
        <authorList>
            <person name="Touchon M."/>
            <person name="Hoede C."/>
            <person name="Tenaillon O."/>
            <person name="Barbe V."/>
            <person name="Baeriswyl S."/>
            <person name="Bidet P."/>
            <person name="Bingen E."/>
            <person name="Bonacorsi S."/>
            <person name="Bouchier C."/>
            <person name="Bouvet O."/>
            <person name="Calteau A."/>
            <person name="Chiapello H."/>
            <person name="Clermont O."/>
            <person name="Cruveiller S."/>
            <person name="Danchin A."/>
            <person name="Diard M."/>
            <person name="Dossat C."/>
            <person name="Karoui M.E."/>
            <person name="Frapy E."/>
            <person name="Garry L."/>
            <person name="Ghigo J.M."/>
            <person name="Gilles A.M."/>
            <person name="Johnson J."/>
            <person name="Le Bouguenec C."/>
            <person name="Lescat M."/>
            <person name="Mangenot S."/>
            <person name="Martinez-Jehanne V."/>
            <person name="Matic I."/>
            <person name="Nassif X."/>
            <person name="Oztas S."/>
            <person name="Petit M.A."/>
            <person name="Pichon C."/>
            <person name="Rouy Z."/>
            <person name="Ruf C.S."/>
            <person name="Schneider D."/>
            <person name="Tourret J."/>
            <person name="Vacherie B."/>
            <person name="Vallenet D."/>
            <person name="Medigue C."/>
            <person name="Rocha E.P.C."/>
            <person name="Denamur E."/>
        </authorList>
    </citation>
    <scope>NUCLEOTIDE SEQUENCE [LARGE SCALE GENOMIC DNA]</scope>
    <source>
        <strain>55989 / EAEC</strain>
    </source>
</reference>
<dbReference type="EC" id="2.8.1.8" evidence="1"/>
<dbReference type="EMBL" id="CU928145">
    <property type="protein sequence ID" value="CAU96492.1"/>
    <property type="molecule type" value="Genomic_DNA"/>
</dbReference>
<dbReference type="RefSeq" id="WP_000042632.1">
    <property type="nucleotide sequence ID" value="NZ_CP028304.1"/>
</dbReference>
<dbReference type="SMR" id="B7L9H2"/>
<dbReference type="GeneID" id="93776854"/>
<dbReference type="KEGG" id="eck:EC55989_0620"/>
<dbReference type="HOGENOM" id="CLU_033144_2_1_6"/>
<dbReference type="UniPathway" id="UPA00538">
    <property type="reaction ID" value="UER00593"/>
</dbReference>
<dbReference type="Proteomes" id="UP000000746">
    <property type="component" value="Chromosome"/>
</dbReference>
<dbReference type="GO" id="GO:0005737">
    <property type="term" value="C:cytoplasm"/>
    <property type="evidence" value="ECO:0007669"/>
    <property type="project" value="UniProtKB-SubCell"/>
</dbReference>
<dbReference type="GO" id="GO:0051539">
    <property type="term" value="F:4 iron, 4 sulfur cluster binding"/>
    <property type="evidence" value="ECO:0007669"/>
    <property type="project" value="UniProtKB-UniRule"/>
</dbReference>
<dbReference type="GO" id="GO:0016992">
    <property type="term" value="F:lipoate synthase activity"/>
    <property type="evidence" value="ECO:0007669"/>
    <property type="project" value="UniProtKB-UniRule"/>
</dbReference>
<dbReference type="GO" id="GO:0046872">
    <property type="term" value="F:metal ion binding"/>
    <property type="evidence" value="ECO:0007669"/>
    <property type="project" value="UniProtKB-KW"/>
</dbReference>
<dbReference type="CDD" id="cd01335">
    <property type="entry name" value="Radical_SAM"/>
    <property type="match status" value="1"/>
</dbReference>
<dbReference type="FunFam" id="3.20.20.70:FF:000023">
    <property type="entry name" value="Lipoyl synthase"/>
    <property type="match status" value="1"/>
</dbReference>
<dbReference type="Gene3D" id="3.20.20.70">
    <property type="entry name" value="Aldolase class I"/>
    <property type="match status" value="1"/>
</dbReference>
<dbReference type="HAMAP" id="MF_00206">
    <property type="entry name" value="Lipoyl_synth"/>
    <property type="match status" value="1"/>
</dbReference>
<dbReference type="InterPro" id="IPR013785">
    <property type="entry name" value="Aldolase_TIM"/>
</dbReference>
<dbReference type="InterPro" id="IPR006638">
    <property type="entry name" value="Elp3/MiaA/NifB-like_rSAM"/>
</dbReference>
<dbReference type="InterPro" id="IPR031691">
    <property type="entry name" value="LIAS_N"/>
</dbReference>
<dbReference type="InterPro" id="IPR003698">
    <property type="entry name" value="Lipoyl_synth"/>
</dbReference>
<dbReference type="InterPro" id="IPR007197">
    <property type="entry name" value="rSAM"/>
</dbReference>
<dbReference type="NCBIfam" id="TIGR00510">
    <property type="entry name" value="lipA"/>
    <property type="match status" value="1"/>
</dbReference>
<dbReference type="NCBIfam" id="NF004019">
    <property type="entry name" value="PRK05481.1"/>
    <property type="match status" value="1"/>
</dbReference>
<dbReference type="NCBIfam" id="NF009544">
    <property type="entry name" value="PRK12928.1"/>
    <property type="match status" value="1"/>
</dbReference>
<dbReference type="PANTHER" id="PTHR10949">
    <property type="entry name" value="LIPOYL SYNTHASE"/>
    <property type="match status" value="1"/>
</dbReference>
<dbReference type="PANTHER" id="PTHR10949:SF0">
    <property type="entry name" value="LIPOYL SYNTHASE, MITOCHONDRIAL"/>
    <property type="match status" value="1"/>
</dbReference>
<dbReference type="Pfam" id="PF16881">
    <property type="entry name" value="LIAS_N"/>
    <property type="match status" value="1"/>
</dbReference>
<dbReference type="Pfam" id="PF04055">
    <property type="entry name" value="Radical_SAM"/>
    <property type="match status" value="1"/>
</dbReference>
<dbReference type="PIRSF" id="PIRSF005963">
    <property type="entry name" value="Lipoyl_synth"/>
    <property type="match status" value="1"/>
</dbReference>
<dbReference type="SFLD" id="SFLDF00271">
    <property type="entry name" value="lipoyl_synthase"/>
    <property type="match status" value="1"/>
</dbReference>
<dbReference type="SFLD" id="SFLDG01058">
    <property type="entry name" value="lipoyl_synthase_like"/>
    <property type="match status" value="1"/>
</dbReference>
<dbReference type="SMART" id="SM00729">
    <property type="entry name" value="Elp3"/>
    <property type="match status" value="1"/>
</dbReference>
<dbReference type="SUPFAM" id="SSF102114">
    <property type="entry name" value="Radical SAM enzymes"/>
    <property type="match status" value="1"/>
</dbReference>
<dbReference type="PROSITE" id="PS51918">
    <property type="entry name" value="RADICAL_SAM"/>
    <property type="match status" value="1"/>
</dbReference>
<feature type="chain" id="PRO_1000124631" description="Lipoyl synthase">
    <location>
        <begin position="1"/>
        <end position="321"/>
    </location>
</feature>
<feature type="domain" description="Radical SAM core" evidence="2">
    <location>
        <begin position="80"/>
        <end position="297"/>
    </location>
</feature>
<feature type="binding site" evidence="1">
    <location>
        <position position="68"/>
    </location>
    <ligand>
        <name>[4Fe-4S] cluster</name>
        <dbReference type="ChEBI" id="CHEBI:49883"/>
        <label>1</label>
    </ligand>
</feature>
<feature type="binding site" evidence="1">
    <location>
        <position position="73"/>
    </location>
    <ligand>
        <name>[4Fe-4S] cluster</name>
        <dbReference type="ChEBI" id="CHEBI:49883"/>
        <label>1</label>
    </ligand>
</feature>
<feature type="binding site" evidence="1">
    <location>
        <position position="79"/>
    </location>
    <ligand>
        <name>[4Fe-4S] cluster</name>
        <dbReference type="ChEBI" id="CHEBI:49883"/>
        <label>1</label>
    </ligand>
</feature>
<feature type="binding site" evidence="1">
    <location>
        <position position="94"/>
    </location>
    <ligand>
        <name>[4Fe-4S] cluster</name>
        <dbReference type="ChEBI" id="CHEBI:49883"/>
        <label>2</label>
        <note>4Fe-4S-S-AdoMet</note>
    </ligand>
</feature>
<feature type="binding site" evidence="1">
    <location>
        <position position="98"/>
    </location>
    <ligand>
        <name>[4Fe-4S] cluster</name>
        <dbReference type="ChEBI" id="CHEBI:49883"/>
        <label>2</label>
        <note>4Fe-4S-S-AdoMet</note>
    </ligand>
</feature>
<feature type="binding site" evidence="1">
    <location>
        <position position="101"/>
    </location>
    <ligand>
        <name>[4Fe-4S] cluster</name>
        <dbReference type="ChEBI" id="CHEBI:49883"/>
        <label>2</label>
        <note>4Fe-4S-S-AdoMet</note>
    </ligand>
</feature>
<feature type="binding site" evidence="1">
    <location>
        <position position="308"/>
    </location>
    <ligand>
        <name>[4Fe-4S] cluster</name>
        <dbReference type="ChEBI" id="CHEBI:49883"/>
        <label>1</label>
    </ligand>
</feature>
<evidence type="ECO:0000255" key="1">
    <source>
        <dbReference type="HAMAP-Rule" id="MF_00206"/>
    </source>
</evidence>
<evidence type="ECO:0000255" key="2">
    <source>
        <dbReference type="PROSITE-ProRule" id="PRU01266"/>
    </source>
</evidence>
<comment type="function">
    <text evidence="1">Catalyzes the radical-mediated insertion of two sulfur atoms into the C-6 and C-8 positions of the octanoyl moiety bound to the lipoyl domains of lipoate-dependent enzymes, thereby converting the octanoylated domains into lipoylated derivatives.</text>
</comment>
<comment type="catalytic activity">
    <reaction evidence="1">
        <text>[[Fe-S] cluster scaffold protein carrying a second [4Fe-4S](2+) cluster] + N(6)-octanoyl-L-lysyl-[protein] + 2 oxidized [2Fe-2S]-[ferredoxin] + 2 S-adenosyl-L-methionine + 4 H(+) = [[Fe-S] cluster scaffold protein] + N(6)-[(R)-dihydrolipoyl]-L-lysyl-[protein] + 4 Fe(3+) + 2 hydrogen sulfide + 2 5'-deoxyadenosine + 2 L-methionine + 2 reduced [2Fe-2S]-[ferredoxin]</text>
        <dbReference type="Rhea" id="RHEA:16585"/>
        <dbReference type="Rhea" id="RHEA-COMP:9928"/>
        <dbReference type="Rhea" id="RHEA-COMP:10000"/>
        <dbReference type="Rhea" id="RHEA-COMP:10001"/>
        <dbReference type="Rhea" id="RHEA-COMP:10475"/>
        <dbReference type="Rhea" id="RHEA-COMP:14568"/>
        <dbReference type="Rhea" id="RHEA-COMP:14569"/>
        <dbReference type="ChEBI" id="CHEBI:15378"/>
        <dbReference type="ChEBI" id="CHEBI:17319"/>
        <dbReference type="ChEBI" id="CHEBI:29034"/>
        <dbReference type="ChEBI" id="CHEBI:29919"/>
        <dbReference type="ChEBI" id="CHEBI:33722"/>
        <dbReference type="ChEBI" id="CHEBI:33737"/>
        <dbReference type="ChEBI" id="CHEBI:33738"/>
        <dbReference type="ChEBI" id="CHEBI:57844"/>
        <dbReference type="ChEBI" id="CHEBI:59789"/>
        <dbReference type="ChEBI" id="CHEBI:78809"/>
        <dbReference type="ChEBI" id="CHEBI:83100"/>
        <dbReference type="EC" id="2.8.1.8"/>
    </reaction>
</comment>
<comment type="cofactor">
    <cofactor evidence="1">
        <name>[4Fe-4S] cluster</name>
        <dbReference type="ChEBI" id="CHEBI:49883"/>
    </cofactor>
    <text evidence="1">Binds 2 [4Fe-4S] clusters per subunit. One cluster is coordinated with 3 cysteines and an exchangeable S-adenosyl-L-methionine.</text>
</comment>
<comment type="pathway">
    <text evidence="1">Protein modification; protein lipoylation via endogenous pathway; protein N(6)-(lipoyl)lysine from octanoyl-[acyl-carrier-protein]: step 2/2.</text>
</comment>
<comment type="subcellular location">
    <subcellularLocation>
        <location evidence="1">Cytoplasm</location>
    </subcellularLocation>
</comment>
<comment type="similarity">
    <text evidence="1">Belongs to the radical SAM superfamily. Lipoyl synthase family.</text>
</comment>
<sequence length="321" mass="36072">MSKPIVMERGVKYRDADKMALIPVKNVATEREALLRKPEWMKIKLPADSTRIQGIKAAMRKNGLHSVCEEASCPNLAECFNHGTATFMILGAICTRRCPFCDVAHGRPVAPDANEPVKLAQTIADMALRYVVITSVDRDDLRDGGAQHFADCITAIREKSPQIKIETLVPDFRGRMDRALDILTATPPDVFNHNLENVPRIYRQVRPGADYNWSLKLLERFKEAHPEIPTKSGLMVGLGETNEEIIEVMRDLRRHGVTMLTLGQYLQPSRHHLPVQRYVSPDEFDEMKAEALAMGFTHAACGPFVRSSYHADLQAKGMEVK</sequence>
<keyword id="KW-0004">4Fe-4S</keyword>
<keyword id="KW-0963">Cytoplasm</keyword>
<keyword id="KW-0408">Iron</keyword>
<keyword id="KW-0411">Iron-sulfur</keyword>
<keyword id="KW-0479">Metal-binding</keyword>
<keyword id="KW-1185">Reference proteome</keyword>
<keyword id="KW-0949">S-adenosyl-L-methionine</keyword>
<keyword id="KW-0808">Transferase</keyword>
<name>LIPA_ECO55</name>
<gene>
    <name evidence="1" type="primary">lipA</name>
    <name type="ordered locus">EC55989_0620</name>
</gene>
<proteinExistence type="inferred from homology"/>
<organism>
    <name type="scientific">Escherichia coli (strain 55989 / EAEC)</name>
    <dbReference type="NCBI Taxonomy" id="585055"/>
    <lineage>
        <taxon>Bacteria</taxon>
        <taxon>Pseudomonadati</taxon>
        <taxon>Pseudomonadota</taxon>
        <taxon>Gammaproteobacteria</taxon>
        <taxon>Enterobacterales</taxon>
        <taxon>Enterobacteriaceae</taxon>
        <taxon>Escherichia</taxon>
    </lineage>
</organism>